<reference key="1">
    <citation type="journal article" date="2006" name="J. Bacteriol.">
        <title>Complete genome sequence of Yersinia pestis strains Antiqua and Nepal516: evidence of gene reduction in an emerging pathogen.</title>
        <authorList>
            <person name="Chain P.S.G."/>
            <person name="Hu P."/>
            <person name="Malfatti S.A."/>
            <person name="Radnedge L."/>
            <person name="Larimer F."/>
            <person name="Vergez L.M."/>
            <person name="Worsham P."/>
            <person name="Chu M.C."/>
            <person name="Andersen G.L."/>
        </authorList>
    </citation>
    <scope>NUCLEOTIDE SEQUENCE [LARGE SCALE GENOMIC DNA]</scope>
    <source>
        <strain>Antiqua</strain>
    </source>
</reference>
<name>BTUB_YERPA</name>
<comment type="function">
    <text evidence="1">Involved in the active translocation of vitamin B12 (cyanocobalamin) across the outer membrane to the periplasmic space. It derives its energy for transport by interacting with the trans-periplasmic membrane protein TonB.</text>
</comment>
<comment type="subcellular location">
    <subcellularLocation>
        <location evidence="1">Cell outer membrane</location>
        <topology evidence="1">Multi-pass membrane protein</topology>
    </subcellularLocation>
</comment>
<comment type="similarity">
    <text evidence="1">Belongs to the TonB-dependent receptor family. BtuB (TC 1.B.14.3.1) subfamily.</text>
</comment>
<comment type="sequence caution" evidence="3">
    <conflict type="erroneous initiation">
        <sequence resource="EMBL-CDS" id="ABG12081"/>
    </conflict>
</comment>
<keyword id="KW-0106">Calcium</keyword>
<keyword id="KW-0998">Cell outer membrane</keyword>
<keyword id="KW-0406">Ion transport</keyword>
<keyword id="KW-0472">Membrane</keyword>
<keyword id="KW-0479">Metal-binding</keyword>
<keyword id="KW-0626">Porin</keyword>
<keyword id="KW-0732">Signal</keyword>
<keyword id="KW-0798">TonB box</keyword>
<keyword id="KW-0812">Transmembrane</keyword>
<keyword id="KW-1134">Transmembrane beta strand</keyword>
<keyword id="KW-0813">Transport</keyword>
<sequence length="625" mass="69808">MTIKKYTLLTALSVTAFSGWAQGNNTTDNNDEMVVTANRFPQPKSSVLAPVDVVTRADIDRWQSTNINDVLRRLPGVDIAQDGGMGQRSSLFIRGTNSSHVLVLIDGVRLNQAGITGASDLSQIPISLVQRIEYIRGPRSAVYGSDAIGGVINILTGRDKPGTTLSAGLGSNGYQTYDGSTQQKLGEDTTVTLAGNYTYSKGYDVVAGMPGAGGPRQPDRDGFMGKMLWAGLEHQFNEQFNGFARVYGFDNRSDYDGYTNYSNPLALIDTRKLSSRTYDTGLRYKNGIYASQFIASYNRTKDYNYSPLFGQHDITASLDEAEQYNLQWGNTFQLTNGMISAGADWQEQRTERKSSNQNTTADFTQHNTGIYLTGQQQISDVTLEGAVRSDDNSQFGWHSTWQTSAGWEFIDGYRLIGSYGTAYKAPNLMQLYSAYGGNANLKPEESKQWEGGVEGLTGPLTWRLSAYRNDIDQLIDYSNLTNGYFNINKATIKGVEWTGSFDTGPLSHQVTLEYLDPRNADTHEILVRRAKQQVKYQLDWQVADLDWSVTYQYLGQRYDKDYSTYPEETVELGGVSLWDLAVSYPVTSHLTVRGRIANLFDKDYEMVYGYQTPGREYYFTGSYNF</sequence>
<evidence type="ECO:0000255" key="1">
    <source>
        <dbReference type="HAMAP-Rule" id="MF_01531"/>
    </source>
</evidence>
<evidence type="ECO:0000255" key="2">
    <source>
        <dbReference type="PROSITE-ProRule" id="PRU01360"/>
    </source>
</evidence>
<evidence type="ECO:0000305" key="3"/>
<proteinExistence type="inferred from homology"/>
<gene>
    <name evidence="1" type="primary">btuB</name>
    <name type="ordered locus">YPA_0112</name>
</gene>
<feature type="signal peptide" evidence="1">
    <location>
        <begin position="1"/>
        <end position="21"/>
    </location>
</feature>
<feature type="chain" id="PRO_5000115719" description="Vitamin B12 transporter BtuB">
    <location>
        <begin position="22"/>
        <end position="625"/>
    </location>
</feature>
<feature type="transmembrane region" description="Beta stranded" evidence="1">
    <location>
        <begin position="163"/>
        <end position="170"/>
    </location>
</feature>
<feature type="transmembrane region" description="Beta stranded" evidence="1">
    <location>
        <begin position="174"/>
        <end position="183"/>
    </location>
</feature>
<feature type="transmembrane region" description="Beta stranded" evidence="1">
    <location>
        <begin position="189"/>
        <end position="200"/>
    </location>
</feature>
<feature type="transmembrane region" description="Beta stranded" evidence="1">
    <location>
        <begin position="223"/>
        <end position="233"/>
    </location>
</feature>
<feature type="transmembrane region" description="Beta stranded" evidence="1">
    <location>
        <begin position="238"/>
        <end position="254"/>
    </location>
</feature>
<feature type="transmembrane region" description="Beta stranded" evidence="1">
    <location>
        <begin position="271"/>
        <end position="285"/>
    </location>
</feature>
<feature type="transmembrane region" description="Beta stranded" evidence="1">
    <location>
        <begin position="287"/>
        <end position="304"/>
    </location>
</feature>
<feature type="transmembrane region" description="Beta stranded" evidence="1">
    <location>
        <begin position="317"/>
        <end position="333"/>
    </location>
</feature>
<feature type="transmembrane region" description="Beta stranded" evidence="1">
    <location>
        <begin position="336"/>
        <end position="345"/>
    </location>
</feature>
<feature type="transmembrane region" description="Beta stranded" evidence="1">
    <location>
        <begin position="363"/>
        <end position="379"/>
    </location>
</feature>
<feature type="transmembrane region" description="Beta stranded" evidence="1">
    <location>
        <begin position="381"/>
        <end position="391"/>
    </location>
</feature>
<feature type="transmembrane region" description="Beta stranded" evidence="1">
    <location>
        <begin position="395"/>
        <end position="410"/>
    </location>
</feature>
<feature type="transmembrane region" description="Beta stranded" evidence="1">
    <location>
        <begin position="413"/>
        <end position="427"/>
    </location>
</feature>
<feature type="transmembrane region" description="Beta stranded" evidence="1">
    <location>
        <begin position="445"/>
        <end position="454"/>
    </location>
</feature>
<feature type="transmembrane region" description="Beta stranded" evidence="1">
    <location>
        <begin position="460"/>
        <end position="469"/>
    </location>
</feature>
<feature type="transmembrane region" description="Beta stranded" evidence="1">
    <location>
        <begin position="484"/>
        <end position="501"/>
    </location>
</feature>
<feature type="transmembrane region" description="Beta stranded" evidence="1">
    <location>
        <begin position="505"/>
        <end position="520"/>
    </location>
</feature>
<feature type="transmembrane region" description="Beta stranded" evidence="1">
    <location>
        <begin position="528"/>
        <end position="540"/>
    </location>
</feature>
<feature type="transmembrane region" description="Beta stranded" evidence="1">
    <location>
        <begin position="546"/>
        <end position="561"/>
    </location>
</feature>
<feature type="transmembrane region" description="Beta stranded" evidence="1">
    <location>
        <begin position="569"/>
        <end position="583"/>
    </location>
</feature>
<feature type="transmembrane region" description="Beta stranded" evidence="1">
    <location>
        <begin position="596"/>
        <end position="607"/>
    </location>
</feature>
<feature type="transmembrane region" description="Beta stranded" evidence="1">
    <location>
        <begin position="613"/>
        <end position="625"/>
    </location>
</feature>
<feature type="domain" description="TBDR plug" evidence="2">
    <location>
        <begin position="43"/>
        <end position="157"/>
    </location>
</feature>
<feature type="domain" description="TBDR beta-barrel" evidence="2">
    <location>
        <begin position="160"/>
        <end position="625"/>
    </location>
</feature>
<feature type="short sequence motif" description="TonB box">
    <location>
        <begin position="31"/>
        <end position="38"/>
    </location>
</feature>
<feature type="short sequence motif" description="TonB C-terminal box">
    <location>
        <begin position="608"/>
        <end position="625"/>
    </location>
</feature>
<feature type="binding site" evidence="1">
    <location>
        <position position="90"/>
    </location>
    <ligand>
        <name>cyanocob(III)alamin</name>
        <dbReference type="ChEBI" id="CHEBI:17439"/>
    </ligand>
</feature>
<feature type="binding site" evidence="1">
    <location>
        <position position="97"/>
    </location>
    <ligand>
        <name>cyanocob(III)alamin</name>
        <dbReference type="ChEBI" id="CHEBI:17439"/>
    </ligand>
</feature>
<feature type="binding site" evidence="1">
    <location>
        <begin position="115"/>
        <end position="116"/>
    </location>
    <ligand>
        <name>cyanocob(III)alamin</name>
        <dbReference type="ChEBI" id="CHEBI:17439"/>
    </ligand>
</feature>
<feature type="binding site" evidence="1">
    <location>
        <position position="204"/>
    </location>
    <ligand>
        <name>Ca(2+)</name>
        <dbReference type="ChEBI" id="CHEBI:29108"/>
        <label>1</label>
    </ligand>
</feature>
<feature type="binding site" evidence="1">
    <location>
        <position position="217"/>
    </location>
    <ligand>
        <name>Ca(2+)</name>
        <dbReference type="ChEBI" id="CHEBI:29108"/>
        <label>1</label>
    </ligand>
</feature>
<feature type="binding site" evidence="1">
    <location>
        <position position="219"/>
    </location>
    <ligand>
        <name>Ca(2+)</name>
        <dbReference type="ChEBI" id="CHEBI:29108"/>
        <label>1</label>
    </ligand>
</feature>
<feature type="binding site" evidence="1">
    <location>
        <position position="219"/>
    </location>
    <ligand>
        <name>Ca(2+)</name>
        <dbReference type="ChEBI" id="CHEBI:29108"/>
        <label>2</label>
    </ligand>
</feature>
<feature type="binding site" evidence="1">
    <location>
        <position position="221"/>
    </location>
    <ligand>
        <name>Ca(2+)</name>
        <dbReference type="ChEBI" id="CHEBI:29108"/>
        <label>1</label>
    </ligand>
</feature>
<feature type="binding site" evidence="1">
    <location>
        <position position="221"/>
    </location>
    <ligand>
        <name>Ca(2+)</name>
        <dbReference type="ChEBI" id="CHEBI:29108"/>
        <label>2</label>
    </ligand>
</feature>
<feature type="binding site" evidence="1">
    <location>
        <position position="255"/>
    </location>
    <ligand>
        <name>Ca(2+)</name>
        <dbReference type="ChEBI" id="CHEBI:29108"/>
        <label>2</label>
    </ligand>
</feature>
<feature type="binding site" evidence="1">
    <location>
        <position position="256"/>
    </location>
    <ligand>
        <name>Ca(2+)</name>
        <dbReference type="ChEBI" id="CHEBI:29108"/>
        <label>1</label>
    </ligand>
</feature>
<feature type="binding site" evidence="1">
    <location>
        <position position="256"/>
    </location>
    <ligand>
        <name>Ca(2+)</name>
        <dbReference type="ChEBI" id="CHEBI:29108"/>
        <label>2</label>
    </ligand>
</feature>
<feature type="binding site" evidence="1">
    <location>
        <position position="269"/>
    </location>
    <ligand>
        <name>Ca(2+)</name>
        <dbReference type="ChEBI" id="CHEBI:29108"/>
        <label>2</label>
    </ligand>
</feature>
<feature type="binding site" evidence="1">
    <location>
        <position position="317"/>
    </location>
    <ligand>
        <name>cyanocob(III)alamin</name>
        <dbReference type="ChEBI" id="CHEBI:17439"/>
    </ligand>
</feature>
<feature type="binding site" evidence="1">
    <location>
        <position position="528"/>
    </location>
    <ligand>
        <name>cyanocob(III)alamin</name>
        <dbReference type="ChEBI" id="CHEBI:17439"/>
    </ligand>
</feature>
<feature type="binding site" evidence="1">
    <location>
        <position position="562"/>
    </location>
    <ligand>
        <name>cyanocob(III)alamin</name>
        <dbReference type="ChEBI" id="CHEBI:17439"/>
    </ligand>
</feature>
<dbReference type="EMBL" id="CP000308">
    <property type="protein sequence ID" value="ABG12081.1"/>
    <property type="status" value="ALT_INIT"/>
    <property type="molecule type" value="Genomic_DNA"/>
</dbReference>
<dbReference type="RefSeq" id="WP_002228170.1">
    <property type="nucleotide sequence ID" value="NZ_CP009906.1"/>
</dbReference>
<dbReference type="SMR" id="Q1CBU1"/>
<dbReference type="GeneID" id="57974790"/>
<dbReference type="KEGG" id="ypa:YPA_0112"/>
<dbReference type="Proteomes" id="UP000001971">
    <property type="component" value="Chromosome"/>
</dbReference>
<dbReference type="GO" id="GO:0009279">
    <property type="term" value="C:cell outer membrane"/>
    <property type="evidence" value="ECO:0007669"/>
    <property type="project" value="UniProtKB-SubCell"/>
</dbReference>
<dbReference type="GO" id="GO:0046930">
    <property type="term" value="C:pore complex"/>
    <property type="evidence" value="ECO:0007669"/>
    <property type="project" value="UniProtKB-KW"/>
</dbReference>
<dbReference type="GO" id="GO:0015420">
    <property type="term" value="F:ABC-type vitamin B12 transporter activity"/>
    <property type="evidence" value="ECO:0007669"/>
    <property type="project" value="InterPro"/>
</dbReference>
<dbReference type="GO" id="GO:0046872">
    <property type="term" value="F:metal ion binding"/>
    <property type="evidence" value="ECO:0007669"/>
    <property type="project" value="UniProtKB-KW"/>
</dbReference>
<dbReference type="GO" id="GO:0015288">
    <property type="term" value="F:porin activity"/>
    <property type="evidence" value="ECO:0007669"/>
    <property type="project" value="UniProtKB-KW"/>
</dbReference>
<dbReference type="GO" id="GO:0006811">
    <property type="term" value="P:monoatomic ion transport"/>
    <property type="evidence" value="ECO:0007669"/>
    <property type="project" value="UniProtKB-KW"/>
</dbReference>
<dbReference type="CDD" id="cd01347">
    <property type="entry name" value="ligand_gated_channel"/>
    <property type="match status" value="1"/>
</dbReference>
<dbReference type="FunFam" id="2.170.130.10:FF:000002">
    <property type="entry name" value="Vitamin B12 transporter BtuB"/>
    <property type="match status" value="1"/>
</dbReference>
<dbReference type="Gene3D" id="2.40.170.20">
    <property type="entry name" value="TonB-dependent receptor, beta-barrel domain"/>
    <property type="match status" value="1"/>
</dbReference>
<dbReference type="Gene3D" id="2.170.130.10">
    <property type="entry name" value="TonB-dependent receptor, plug domain"/>
    <property type="match status" value="1"/>
</dbReference>
<dbReference type="HAMAP" id="MF_01531">
    <property type="entry name" value="BtuB"/>
    <property type="match status" value="1"/>
</dbReference>
<dbReference type="InterPro" id="IPR010101">
    <property type="entry name" value="B12_transptr_BtuB"/>
</dbReference>
<dbReference type="InterPro" id="IPR012910">
    <property type="entry name" value="Plug_dom"/>
</dbReference>
<dbReference type="InterPro" id="IPR037066">
    <property type="entry name" value="Plug_dom_sf"/>
</dbReference>
<dbReference type="InterPro" id="IPR039426">
    <property type="entry name" value="TonB-dep_rcpt-like"/>
</dbReference>
<dbReference type="InterPro" id="IPR000531">
    <property type="entry name" value="TonB-dep_rcpt_b-brl"/>
</dbReference>
<dbReference type="InterPro" id="IPR036942">
    <property type="entry name" value="TonB_rcpt_b-brl_sf"/>
</dbReference>
<dbReference type="InterPro" id="IPR010917">
    <property type="entry name" value="TonB_rcpt_CS"/>
</dbReference>
<dbReference type="NCBIfam" id="NF007926">
    <property type="entry name" value="PRK10641.1"/>
    <property type="match status" value="1"/>
</dbReference>
<dbReference type="NCBIfam" id="TIGR01779">
    <property type="entry name" value="TonB-B12"/>
    <property type="match status" value="1"/>
</dbReference>
<dbReference type="PANTHER" id="PTHR30069:SF53">
    <property type="entry name" value="COLICIN I RECEPTOR-RELATED"/>
    <property type="match status" value="1"/>
</dbReference>
<dbReference type="PANTHER" id="PTHR30069">
    <property type="entry name" value="TONB-DEPENDENT OUTER MEMBRANE RECEPTOR"/>
    <property type="match status" value="1"/>
</dbReference>
<dbReference type="Pfam" id="PF07715">
    <property type="entry name" value="Plug"/>
    <property type="match status" value="1"/>
</dbReference>
<dbReference type="Pfam" id="PF00593">
    <property type="entry name" value="TonB_dep_Rec_b-barrel"/>
    <property type="match status" value="1"/>
</dbReference>
<dbReference type="SUPFAM" id="SSF56935">
    <property type="entry name" value="Porins"/>
    <property type="match status" value="1"/>
</dbReference>
<dbReference type="PROSITE" id="PS01156">
    <property type="entry name" value="TONB_DEPENDENT_REC_2"/>
    <property type="match status" value="1"/>
</dbReference>
<dbReference type="PROSITE" id="PS52016">
    <property type="entry name" value="TONB_DEPENDENT_REC_3"/>
    <property type="match status" value="1"/>
</dbReference>
<accession>Q1CBU1</accession>
<organism>
    <name type="scientific">Yersinia pestis bv. Antiqua (strain Antiqua)</name>
    <dbReference type="NCBI Taxonomy" id="360102"/>
    <lineage>
        <taxon>Bacteria</taxon>
        <taxon>Pseudomonadati</taxon>
        <taxon>Pseudomonadota</taxon>
        <taxon>Gammaproteobacteria</taxon>
        <taxon>Enterobacterales</taxon>
        <taxon>Yersiniaceae</taxon>
        <taxon>Yersinia</taxon>
    </lineage>
</organism>
<protein>
    <recommendedName>
        <fullName evidence="1">Vitamin B12 transporter BtuB</fullName>
    </recommendedName>
    <alternativeName>
        <fullName evidence="1">Cobalamin receptor</fullName>
    </alternativeName>
    <alternativeName>
        <fullName evidence="1">Outer membrane cobalamin translocator</fullName>
    </alternativeName>
</protein>